<protein>
    <recommendedName>
        <fullName evidence="1">Aspartate--tRNA ligase</fullName>
        <ecNumber evidence="1">6.1.1.12</ecNumber>
    </recommendedName>
    <alternativeName>
        <fullName evidence="1">Aspartyl-tRNA synthetase</fullName>
        <shortName evidence="1">AspRS</shortName>
    </alternativeName>
</protein>
<feature type="chain" id="PRO_1000006676" description="Aspartate--tRNA ligase">
    <location>
        <begin position="1"/>
        <end position="583"/>
    </location>
</feature>
<feature type="region of interest" description="Aspartate" evidence="1">
    <location>
        <begin position="198"/>
        <end position="201"/>
    </location>
</feature>
<feature type="binding site" evidence="1">
    <location>
        <position position="174"/>
    </location>
    <ligand>
        <name>L-aspartate</name>
        <dbReference type="ChEBI" id="CHEBI:29991"/>
    </ligand>
</feature>
<feature type="binding site" evidence="1">
    <location>
        <begin position="220"/>
        <end position="222"/>
    </location>
    <ligand>
        <name>ATP</name>
        <dbReference type="ChEBI" id="CHEBI:30616"/>
    </ligand>
</feature>
<feature type="binding site" evidence="1">
    <location>
        <position position="220"/>
    </location>
    <ligand>
        <name>L-aspartate</name>
        <dbReference type="ChEBI" id="CHEBI:29991"/>
    </ligand>
</feature>
<feature type="binding site" evidence="1">
    <location>
        <position position="229"/>
    </location>
    <ligand>
        <name>ATP</name>
        <dbReference type="ChEBI" id="CHEBI:30616"/>
    </ligand>
</feature>
<feature type="binding site" evidence="1">
    <location>
        <position position="445"/>
    </location>
    <ligand>
        <name>L-aspartate</name>
        <dbReference type="ChEBI" id="CHEBI:29991"/>
    </ligand>
</feature>
<feature type="binding site" evidence="1">
    <location>
        <position position="479"/>
    </location>
    <ligand>
        <name>ATP</name>
        <dbReference type="ChEBI" id="CHEBI:30616"/>
    </ligand>
</feature>
<feature type="binding site" evidence="1">
    <location>
        <position position="486"/>
    </location>
    <ligand>
        <name>L-aspartate</name>
        <dbReference type="ChEBI" id="CHEBI:29991"/>
    </ligand>
</feature>
<feature type="binding site" evidence="1">
    <location>
        <begin position="531"/>
        <end position="534"/>
    </location>
    <ligand>
        <name>ATP</name>
        <dbReference type="ChEBI" id="CHEBI:30616"/>
    </ligand>
</feature>
<dbReference type="EC" id="6.1.1.12" evidence="1"/>
<dbReference type="EMBL" id="AM398681">
    <property type="protein sequence ID" value="CAL42389.1"/>
    <property type="molecule type" value="Genomic_DNA"/>
</dbReference>
<dbReference type="RefSeq" id="WP_011962449.1">
    <property type="nucleotide sequence ID" value="NC_009613.3"/>
</dbReference>
<dbReference type="RefSeq" id="YP_001295209.1">
    <property type="nucleotide sequence ID" value="NC_009613.3"/>
</dbReference>
<dbReference type="SMR" id="A6GWB6"/>
<dbReference type="STRING" id="402612.FP0275"/>
<dbReference type="EnsemblBacteria" id="CAL42389">
    <property type="protein sequence ID" value="CAL42389"/>
    <property type="gene ID" value="FP0275"/>
</dbReference>
<dbReference type="GeneID" id="66553907"/>
<dbReference type="KEGG" id="fps:FP0275"/>
<dbReference type="PATRIC" id="fig|402612.5.peg.288"/>
<dbReference type="eggNOG" id="COG0173">
    <property type="taxonomic scope" value="Bacteria"/>
</dbReference>
<dbReference type="HOGENOM" id="CLU_014330_3_2_10"/>
<dbReference type="OrthoDB" id="9802326at2"/>
<dbReference type="Proteomes" id="UP000006394">
    <property type="component" value="Chromosome"/>
</dbReference>
<dbReference type="GO" id="GO:0005737">
    <property type="term" value="C:cytoplasm"/>
    <property type="evidence" value="ECO:0007669"/>
    <property type="project" value="UniProtKB-SubCell"/>
</dbReference>
<dbReference type="GO" id="GO:0004815">
    <property type="term" value="F:aspartate-tRNA ligase activity"/>
    <property type="evidence" value="ECO:0007669"/>
    <property type="project" value="UniProtKB-UniRule"/>
</dbReference>
<dbReference type="GO" id="GO:0005524">
    <property type="term" value="F:ATP binding"/>
    <property type="evidence" value="ECO:0007669"/>
    <property type="project" value="UniProtKB-UniRule"/>
</dbReference>
<dbReference type="GO" id="GO:0003676">
    <property type="term" value="F:nucleic acid binding"/>
    <property type="evidence" value="ECO:0007669"/>
    <property type="project" value="InterPro"/>
</dbReference>
<dbReference type="GO" id="GO:0006422">
    <property type="term" value="P:aspartyl-tRNA aminoacylation"/>
    <property type="evidence" value="ECO:0007669"/>
    <property type="project" value="UniProtKB-UniRule"/>
</dbReference>
<dbReference type="CDD" id="cd00777">
    <property type="entry name" value="AspRS_core"/>
    <property type="match status" value="1"/>
</dbReference>
<dbReference type="CDD" id="cd04317">
    <property type="entry name" value="EcAspRS_like_N"/>
    <property type="match status" value="1"/>
</dbReference>
<dbReference type="Gene3D" id="3.30.930.10">
    <property type="entry name" value="Bira Bifunctional Protein, Domain 2"/>
    <property type="match status" value="1"/>
</dbReference>
<dbReference type="Gene3D" id="3.30.1360.30">
    <property type="entry name" value="GAD-like domain"/>
    <property type="match status" value="1"/>
</dbReference>
<dbReference type="Gene3D" id="2.40.50.140">
    <property type="entry name" value="Nucleic acid-binding proteins"/>
    <property type="match status" value="1"/>
</dbReference>
<dbReference type="HAMAP" id="MF_00044">
    <property type="entry name" value="Asp_tRNA_synth_type1"/>
    <property type="match status" value="1"/>
</dbReference>
<dbReference type="InterPro" id="IPR004364">
    <property type="entry name" value="Aa-tRNA-synt_II"/>
</dbReference>
<dbReference type="InterPro" id="IPR006195">
    <property type="entry name" value="aa-tRNA-synth_II"/>
</dbReference>
<dbReference type="InterPro" id="IPR045864">
    <property type="entry name" value="aa-tRNA-synth_II/BPL/LPL"/>
</dbReference>
<dbReference type="InterPro" id="IPR004524">
    <property type="entry name" value="Asp-tRNA-ligase_1"/>
</dbReference>
<dbReference type="InterPro" id="IPR047089">
    <property type="entry name" value="Asp-tRNA-ligase_1_N"/>
</dbReference>
<dbReference type="InterPro" id="IPR002312">
    <property type="entry name" value="Asp/Asn-tRNA-synth_IIb"/>
</dbReference>
<dbReference type="InterPro" id="IPR047090">
    <property type="entry name" value="AspRS_core"/>
</dbReference>
<dbReference type="InterPro" id="IPR004115">
    <property type="entry name" value="GAD-like_sf"/>
</dbReference>
<dbReference type="InterPro" id="IPR029351">
    <property type="entry name" value="GAD_dom"/>
</dbReference>
<dbReference type="InterPro" id="IPR012340">
    <property type="entry name" value="NA-bd_OB-fold"/>
</dbReference>
<dbReference type="InterPro" id="IPR004365">
    <property type="entry name" value="NA-bd_OB_tRNA"/>
</dbReference>
<dbReference type="NCBIfam" id="TIGR00459">
    <property type="entry name" value="aspS_bact"/>
    <property type="match status" value="1"/>
</dbReference>
<dbReference type="NCBIfam" id="NF001750">
    <property type="entry name" value="PRK00476.1"/>
    <property type="match status" value="1"/>
</dbReference>
<dbReference type="PANTHER" id="PTHR22594:SF5">
    <property type="entry name" value="ASPARTATE--TRNA LIGASE, MITOCHONDRIAL"/>
    <property type="match status" value="1"/>
</dbReference>
<dbReference type="PANTHER" id="PTHR22594">
    <property type="entry name" value="ASPARTYL/LYSYL-TRNA SYNTHETASE"/>
    <property type="match status" value="1"/>
</dbReference>
<dbReference type="Pfam" id="PF02938">
    <property type="entry name" value="GAD"/>
    <property type="match status" value="1"/>
</dbReference>
<dbReference type="Pfam" id="PF00152">
    <property type="entry name" value="tRNA-synt_2"/>
    <property type="match status" value="1"/>
</dbReference>
<dbReference type="Pfam" id="PF01336">
    <property type="entry name" value="tRNA_anti-codon"/>
    <property type="match status" value="1"/>
</dbReference>
<dbReference type="PRINTS" id="PR01042">
    <property type="entry name" value="TRNASYNTHASP"/>
</dbReference>
<dbReference type="SUPFAM" id="SSF55681">
    <property type="entry name" value="Class II aaRS and biotin synthetases"/>
    <property type="match status" value="1"/>
</dbReference>
<dbReference type="SUPFAM" id="SSF55261">
    <property type="entry name" value="GAD domain-like"/>
    <property type="match status" value="1"/>
</dbReference>
<dbReference type="SUPFAM" id="SSF50249">
    <property type="entry name" value="Nucleic acid-binding proteins"/>
    <property type="match status" value="1"/>
</dbReference>
<dbReference type="PROSITE" id="PS50862">
    <property type="entry name" value="AA_TRNA_LIGASE_II"/>
    <property type="match status" value="1"/>
</dbReference>
<reference key="1">
    <citation type="journal article" date="2007" name="Nat. Biotechnol.">
        <title>Complete genome sequence of the fish pathogen Flavobacterium psychrophilum.</title>
        <authorList>
            <person name="Duchaud E."/>
            <person name="Boussaha M."/>
            <person name="Loux V."/>
            <person name="Bernardet J.-F."/>
            <person name="Michel C."/>
            <person name="Kerouault B."/>
            <person name="Mondot S."/>
            <person name="Nicolas P."/>
            <person name="Bossy R."/>
            <person name="Caron C."/>
            <person name="Bessieres P."/>
            <person name="Gibrat J.-F."/>
            <person name="Claverol S."/>
            <person name="Dumetz F."/>
            <person name="Le Henaff M."/>
            <person name="Benmansour A."/>
        </authorList>
    </citation>
    <scope>NUCLEOTIDE SEQUENCE [LARGE SCALE GENOMIC DNA]</scope>
    <source>
        <strain>ATCC 49511 / DSM 21280 / CIP 103535 / JIP02/86</strain>
    </source>
</reference>
<sequence length="583" mass="66453">MYRSHNCGELNATHINKEVTLAGWVQKSRDKGFMNWVDLRDRYGITQLMFDESRSDKTVFELAKTLGREFVIQVKGTVIEREAKNKNISTGEIEILVTQMTILNSSLTPPFTIEDETDGGEDIRMKYRYLDIRRNPVKNSLLFRHKVAMEVRKYLSDLDFCEVETPYLIKSTPEGARDFVVPSRMNEGQFYALPQSPQTFKQLLMVGGMDKYFQIVKCFRDEDLRADRQPEFTQIDCEMAFVEQEDILNIFEGLTRHLLKELKGIEVEKFPRMTYNHAMKTYGNDKPDIRFGMEFGELNEYAKHKDFPVFNAAELVVAIAVPGVGEYSRKEIDALIEWVKRPQVGASGMVYVKCNEDGTYKSSVDKFYDQGDLSHWAKTTGAKAGDMIFVLSGPADKTRAQLSALRMELATRLGLRNPAEFAPLWVVDFPLLEFDEESGRYHAMHHPFTSPKPEDMHLLETDPKSVRANAYDMVLNGNEIGGGSIRIHDKNTQALMFKYLGFTEEEAKNQFGFLMDAFQFGAPPHGGLAFGLDRLVAILGGQETIRDFIAFPKNNSGRDVMIDAPSIIDDSQLKELHIQLDLK</sequence>
<gene>
    <name evidence="1" type="primary">aspS</name>
    <name type="ordered locus">FP0275</name>
</gene>
<evidence type="ECO:0000255" key="1">
    <source>
        <dbReference type="HAMAP-Rule" id="MF_00044"/>
    </source>
</evidence>
<comment type="function">
    <text evidence="1">Catalyzes the attachment of L-aspartate to tRNA(Asp) in a two-step reaction: L-aspartate is first activated by ATP to form Asp-AMP and then transferred to the acceptor end of tRNA(Asp).</text>
</comment>
<comment type="catalytic activity">
    <reaction evidence="1">
        <text>tRNA(Asp) + L-aspartate + ATP = L-aspartyl-tRNA(Asp) + AMP + diphosphate</text>
        <dbReference type="Rhea" id="RHEA:19649"/>
        <dbReference type="Rhea" id="RHEA-COMP:9660"/>
        <dbReference type="Rhea" id="RHEA-COMP:9678"/>
        <dbReference type="ChEBI" id="CHEBI:29991"/>
        <dbReference type="ChEBI" id="CHEBI:30616"/>
        <dbReference type="ChEBI" id="CHEBI:33019"/>
        <dbReference type="ChEBI" id="CHEBI:78442"/>
        <dbReference type="ChEBI" id="CHEBI:78516"/>
        <dbReference type="ChEBI" id="CHEBI:456215"/>
        <dbReference type="EC" id="6.1.1.12"/>
    </reaction>
</comment>
<comment type="subunit">
    <text evidence="1">Homodimer.</text>
</comment>
<comment type="subcellular location">
    <subcellularLocation>
        <location evidence="1">Cytoplasm</location>
    </subcellularLocation>
</comment>
<comment type="similarity">
    <text evidence="1">Belongs to the class-II aminoacyl-tRNA synthetase family. Type 1 subfamily.</text>
</comment>
<accession>A6GWB6</accession>
<name>SYD_FLAPJ</name>
<proteinExistence type="inferred from homology"/>
<organism>
    <name type="scientific">Flavobacterium psychrophilum (strain ATCC 49511 / DSM 21280 / CIP 103535 / JIP02/86)</name>
    <dbReference type="NCBI Taxonomy" id="402612"/>
    <lineage>
        <taxon>Bacteria</taxon>
        <taxon>Pseudomonadati</taxon>
        <taxon>Bacteroidota</taxon>
        <taxon>Flavobacteriia</taxon>
        <taxon>Flavobacteriales</taxon>
        <taxon>Flavobacteriaceae</taxon>
        <taxon>Flavobacterium</taxon>
    </lineage>
</organism>
<keyword id="KW-0030">Aminoacyl-tRNA synthetase</keyword>
<keyword id="KW-0067">ATP-binding</keyword>
<keyword id="KW-0963">Cytoplasm</keyword>
<keyword id="KW-0436">Ligase</keyword>
<keyword id="KW-0547">Nucleotide-binding</keyword>
<keyword id="KW-0648">Protein biosynthesis</keyword>
<keyword id="KW-1185">Reference proteome</keyword>